<comment type="function">
    <text evidence="1">Involved in the regulation of glutamine synthetase GlnA, a key enzyme in the process to assimilate ammonia. When cellular nitrogen levels are high, the C-terminal adenylyl transferase (AT) inactivates GlnA by covalent transfer of an adenylyl group from ATP to specific tyrosine residue of GlnA, thus reducing its activity. Conversely, when nitrogen levels are low, the N-terminal adenylyl removase (AR) activates GlnA by removing the adenylyl group by phosphorolysis, increasing its activity. The regulatory region of GlnE binds the signal transduction protein PII (GlnB) which indicates the nitrogen status of the cell.</text>
</comment>
<comment type="catalytic activity">
    <reaction evidence="1">
        <text>[glutamine synthetase]-O(4)-(5'-adenylyl)-L-tyrosine + phosphate = [glutamine synthetase]-L-tyrosine + ADP</text>
        <dbReference type="Rhea" id="RHEA:43716"/>
        <dbReference type="Rhea" id="RHEA-COMP:10660"/>
        <dbReference type="Rhea" id="RHEA-COMP:10661"/>
        <dbReference type="ChEBI" id="CHEBI:43474"/>
        <dbReference type="ChEBI" id="CHEBI:46858"/>
        <dbReference type="ChEBI" id="CHEBI:83624"/>
        <dbReference type="ChEBI" id="CHEBI:456216"/>
        <dbReference type="EC" id="2.7.7.89"/>
    </reaction>
</comment>
<comment type="catalytic activity">
    <reaction evidence="1">
        <text>[glutamine synthetase]-L-tyrosine + ATP = [glutamine synthetase]-O(4)-(5'-adenylyl)-L-tyrosine + diphosphate</text>
        <dbReference type="Rhea" id="RHEA:18589"/>
        <dbReference type="Rhea" id="RHEA-COMP:10660"/>
        <dbReference type="Rhea" id="RHEA-COMP:10661"/>
        <dbReference type="ChEBI" id="CHEBI:30616"/>
        <dbReference type="ChEBI" id="CHEBI:33019"/>
        <dbReference type="ChEBI" id="CHEBI:46858"/>
        <dbReference type="ChEBI" id="CHEBI:83624"/>
        <dbReference type="EC" id="2.7.7.42"/>
    </reaction>
</comment>
<comment type="cofactor">
    <cofactor evidence="1">
        <name>Mg(2+)</name>
        <dbReference type="ChEBI" id="CHEBI:18420"/>
    </cofactor>
</comment>
<comment type="similarity">
    <text evidence="1">Belongs to the GlnE family.</text>
</comment>
<keyword id="KW-0067">ATP-binding</keyword>
<keyword id="KW-0460">Magnesium</keyword>
<keyword id="KW-0511">Multifunctional enzyme</keyword>
<keyword id="KW-0547">Nucleotide-binding</keyword>
<keyword id="KW-0548">Nucleotidyltransferase</keyword>
<keyword id="KW-0808">Transferase</keyword>
<gene>
    <name evidence="1" type="primary">glnE</name>
    <name type="ordered locus">BWG_2764</name>
</gene>
<feature type="chain" id="PRO_1000212985" description="Bifunctional glutamine synthetase adenylyltransferase/adenylyl-removing enzyme">
    <location>
        <begin position="1"/>
        <end position="946"/>
    </location>
</feature>
<feature type="region of interest" description="Adenylyl removase" evidence="1">
    <location>
        <begin position="1"/>
        <end position="440"/>
    </location>
</feature>
<feature type="region of interest" description="Adenylyl transferase" evidence="1">
    <location>
        <begin position="449"/>
        <end position="946"/>
    </location>
</feature>
<protein>
    <recommendedName>
        <fullName evidence="1">Bifunctional glutamine synthetase adenylyltransferase/adenylyl-removing enzyme</fullName>
    </recommendedName>
    <alternativeName>
        <fullName evidence="1">ATP:glutamine synthetase adenylyltransferase</fullName>
    </alternativeName>
    <alternativeName>
        <fullName evidence="1">ATase</fullName>
    </alternativeName>
    <domain>
        <recommendedName>
            <fullName evidence="1">Glutamine synthetase adenylyl-L-tyrosine phosphorylase</fullName>
            <ecNumber evidence="1">2.7.7.89</ecNumber>
        </recommendedName>
        <alternativeName>
            <fullName evidence="1">Adenylyl removase</fullName>
            <shortName evidence="1">AR</shortName>
            <shortName evidence="1">AT-N</shortName>
        </alternativeName>
    </domain>
    <domain>
        <recommendedName>
            <fullName evidence="1">Glutamine synthetase adenylyl transferase</fullName>
            <ecNumber evidence="1">2.7.7.42</ecNumber>
        </recommendedName>
        <alternativeName>
            <fullName evidence="1">Adenylyl transferase</fullName>
            <shortName evidence="1">AT</shortName>
            <shortName evidence="1">AT-C</shortName>
        </alternativeName>
    </domain>
</protein>
<reference key="1">
    <citation type="journal article" date="2009" name="J. Bacteriol.">
        <title>Genomic sequencing reveals regulatory mutations and recombinational events in the widely used MC4100 lineage of Escherichia coli K-12.</title>
        <authorList>
            <person name="Ferenci T."/>
            <person name="Zhou Z."/>
            <person name="Betteridge T."/>
            <person name="Ren Y."/>
            <person name="Liu Y."/>
            <person name="Feng L."/>
            <person name="Reeves P.R."/>
            <person name="Wang L."/>
        </authorList>
    </citation>
    <scope>NUCLEOTIDE SEQUENCE [LARGE SCALE GENOMIC DNA]</scope>
    <source>
        <strain>K12 / MC4100 / BW2952</strain>
    </source>
</reference>
<accession>C4ZQX0</accession>
<dbReference type="EC" id="2.7.7.89" evidence="1"/>
<dbReference type="EC" id="2.7.7.42" evidence="1"/>
<dbReference type="EMBL" id="CP001396">
    <property type="protein sequence ID" value="ACR63180.1"/>
    <property type="molecule type" value="Genomic_DNA"/>
</dbReference>
<dbReference type="RefSeq" id="WP_001301081.1">
    <property type="nucleotide sequence ID" value="NC_012759.1"/>
</dbReference>
<dbReference type="SMR" id="C4ZQX0"/>
<dbReference type="KEGG" id="ebw:BWG_2764"/>
<dbReference type="HOGENOM" id="CLU_006233_0_1_6"/>
<dbReference type="GO" id="GO:0005829">
    <property type="term" value="C:cytosol"/>
    <property type="evidence" value="ECO:0007669"/>
    <property type="project" value="TreeGrafter"/>
</dbReference>
<dbReference type="GO" id="GO:0008882">
    <property type="term" value="F:[glutamate-ammonia-ligase] adenylyltransferase activity"/>
    <property type="evidence" value="ECO:0007669"/>
    <property type="project" value="UniProtKB-UniRule"/>
</dbReference>
<dbReference type="GO" id="GO:0047388">
    <property type="term" value="F:[glutamine synthetase]-adenylyl-L-tyrosine phosphorylase activity"/>
    <property type="evidence" value="ECO:0007669"/>
    <property type="project" value="UniProtKB-EC"/>
</dbReference>
<dbReference type="GO" id="GO:0005524">
    <property type="term" value="F:ATP binding"/>
    <property type="evidence" value="ECO:0007669"/>
    <property type="project" value="UniProtKB-UniRule"/>
</dbReference>
<dbReference type="GO" id="GO:0000287">
    <property type="term" value="F:magnesium ion binding"/>
    <property type="evidence" value="ECO:0007669"/>
    <property type="project" value="UniProtKB-UniRule"/>
</dbReference>
<dbReference type="GO" id="GO:0000820">
    <property type="term" value="P:regulation of glutamine family amino acid metabolic process"/>
    <property type="evidence" value="ECO:0007669"/>
    <property type="project" value="UniProtKB-UniRule"/>
</dbReference>
<dbReference type="CDD" id="cd05401">
    <property type="entry name" value="NT_GlnE_GlnD_like"/>
    <property type="match status" value="2"/>
</dbReference>
<dbReference type="FunFam" id="1.10.4050.10:FF:000001">
    <property type="entry name" value="Bifunctional glutamine synthetase adenylyltransferase/adenylyl-removing enzyme"/>
    <property type="match status" value="1"/>
</dbReference>
<dbReference type="FunFam" id="1.20.120.1510:FF:000001">
    <property type="entry name" value="Bifunctional glutamine synthetase adenylyltransferase/adenylyl-removing enzyme"/>
    <property type="match status" value="1"/>
</dbReference>
<dbReference type="FunFam" id="1.20.120.330:FF:000005">
    <property type="entry name" value="Bifunctional glutamine synthetase adenylyltransferase/adenylyl-removing enzyme"/>
    <property type="match status" value="1"/>
</dbReference>
<dbReference type="FunFam" id="1.20.120.330:FF:000008">
    <property type="entry name" value="Bifunctional glutamine synthetase adenylyltransferase/adenylyl-removing enzyme"/>
    <property type="match status" value="1"/>
</dbReference>
<dbReference type="FunFam" id="3.30.460.10:FF:000009">
    <property type="entry name" value="Bifunctional glutamine synthetase adenylyltransferase/adenylyl-removing enzyme"/>
    <property type="match status" value="1"/>
</dbReference>
<dbReference type="FunFam" id="3.30.460.10:FF:000014">
    <property type="entry name" value="Bifunctional glutamine synthetase adenylyltransferase/adenylyl-removing enzyme"/>
    <property type="match status" value="1"/>
</dbReference>
<dbReference type="Gene3D" id="1.20.120.1510">
    <property type="match status" value="1"/>
</dbReference>
<dbReference type="Gene3D" id="3.30.460.10">
    <property type="entry name" value="Beta Polymerase, domain 2"/>
    <property type="match status" value="2"/>
</dbReference>
<dbReference type="Gene3D" id="1.10.4050.10">
    <property type="entry name" value="Glutamine synthase adenylyltransferase GlnE"/>
    <property type="match status" value="1"/>
</dbReference>
<dbReference type="Gene3D" id="1.20.120.330">
    <property type="entry name" value="Nucleotidyltransferases domain 2"/>
    <property type="match status" value="2"/>
</dbReference>
<dbReference type="HAMAP" id="MF_00802">
    <property type="entry name" value="GlnE"/>
    <property type="match status" value="1"/>
</dbReference>
<dbReference type="InterPro" id="IPR023057">
    <property type="entry name" value="GlnE"/>
</dbReference>
<dbReference type="InterPro" id="IPR005190">
    <property type="entry name" value="GlnE_rpt_dom"/>
</dbReference>
<dbReference type="InterPro" id="IPR043519">
    <property type="entry name" value="NT_sf"/>
</dbReference>
<dbReference type="InterPro" id="IPR013546">
    <property type="entry name" value="PII_UdlTrfase/GS_AdlTrfase"/>
</dbReference>
<dbReference type="NCBIfam" id="NF008292">
    <property type="entry name" value="PRK11072.1"/>
    <property type="match status" value="1"/>
</dbReference>
<dbReference type="PANTHER" id="PTHR30621:SF0">
    <property type="entry name" value="BIFUNCTIONAL GLUTAMINE SYNTHETASE ADENYLYLTRANSFERASE_ADENYLYL-REMOVING ENZYME"/>
    <property type="match status" value="1"/>
</dbReference>
<dbReference type="PANTHER" id="PTHR30621">
    <property type="entry name" value="GLUTAMINE SYNTHETASE ADENYLYLTRANSFERASE"/>
    <property type="match status" value="1"/>
</dbReference>
<dbReference type="Pfam" id="PF08335">
    <property type="entry name" value="GlnD_UR_UTase"/>
    <property type="match status" value="2"/>
</dbReference>
<dbReference type="Pfam" id="PF03710">
    <property type="entry name" value="GlnE"/>
    <property type="match status" value="2"/>
</dbReference>
<dbReference type="SUPFAM" id="SSF81301">
    <property type="entry name" value="Nucleotidyltransferase"/>
    <property type="match status" value="2"/>
</dbReference>
<dbReference type="SUPFAM" id="SSF81593">
    <property type="entry name" value="Nucleotidyltransferase substrate binding subunit/domain"/>
    <property type="match status" value="2"/>
</dbReference>
<evidence type="ECO:0000255" key="1">
    <source>
        <dbReference type="HAMAP-Rule" id="MF_00802"/>
    </source>
</evidence>
<sequence length="946" mass="108418">MKPLSSPLQQYWQTVVERLPEPLAEESLSAQAKSVLTFSDFVQDSVIAHPEWLTELESQPPQADEWQHYAAWLQEALCNVSDEAGLMRELRLFRRRIMVRIAWAQTLALVTEESILQQLSYLAETLIVAARDWLYDACCREWGTPCNAQGEAQPLLILGMGKLGGGELNFSSDIDLIFAWPEHGCTQGGRRELDNAQFFTRMGQRLIKVLDQPTQDGFVYRVDMRLRPFGESGPLVLSFAALEDYYQEQGRDWERYAMVKARIMGDSEGVYANELRAMLRPFVFRRYIDFSVIQSLRNMKGMIAREVRRRGLTDNIKLGAGGIREIEFIVQVFQLIRGGREPSLQSRSLLPTLSAIAELHLLSENDAEQLRVAYLFLRRLENLLQSINDEQTQTLPSDELNRARLAWAMDFADWPQLTGALTAHMTNVRRVFNELIGDDESETQEESLSEQWRELWQDALQEDDTTPVLAHLSEDDRKQVLTLIADFRKELDKRTIGPRGRQVLDHLMPHLLSDVCAREDAAVTLSRITALLVGIVTRTTYLELLSEFPAALKHLISLCAASPMIASQLARYPLLLDELLDPNTLYQPTATDAYRDELRQYLLRVPEDDEEQQLEALRQFKQAQLLRIAAADIAGTLPVMKVSDHLTWLAEAMIDAVVQQAWVQMVARYGKPNHLNEREGRGFAVVGYGKLGGWELGYSSDLDLIFLHDCPMDAMTDGEREIDGRQFYLRLAQRIMHLFSTRTSSGILYEVDARLRPSGAAGMLVTSAEAFADYQKNEAWTWEHQALVRARVVYGDPQLTAHFDAVRREIMTLPREGKTLQTEVREMREKMRAHLGNKHRDRFDIKADEGGITDIEFITQYLVLRYAHEKPKLTRWSDNVRILELLAQNDIMEEQEAMALTRAYTTLRDELHHLALQELPGHVSEDCFTAERELVRASWQKWLVEE</sequence>
<proteinExistence type="inferred from homology"/>
<name>GLNE_ECOBW</name>
<organism>
    <name type="scientific">Escherichia coli (strain K12 / MC4100 / BW2952)</name>
    <dbReference type="NCBI Taxonomy" id="595496"/>
    <lineage>
        <taxon>Bacteria</taxon>
        <taxon>Pseudomonadati</taxon>
        <taxon>Pseudomonadota</taxon>
        <taxon>Gammaproteobacteria</taxon>
        <taxon>Enterobacterales</taxon>
        <taxon>Enterobacteriaceae</taxon>
        <taxon>Escherichia</taxon>
    </lineage>
</organism>